<gene>
    <name evidence="26 32" type="primary">Akt</name>
    <name evidence="30" type="synonym">Akt1</name>
    <name evidence="32" type="ORF">CG4006</name>
</gene>
<keyword id="KW-0024">Alternative initiation</keyword>
<keyword id="KW-0053">Apoptosis</keyword>
<keyword id="KW-0067">ATP-binding</keyword>
<keyword id="KW-1003">Cell membrane</keyword>
<keyword id="KW-0963">Cytoplasm</keyword>
<keyword id="KW-0217">Developmental protein</keyword>
<keyword id="KW-0341">Growth regulation</keyword>
<keyword id="KW-0418">Kinase</keyword>
<keyword id="KW-0472">Membrane</keyword>
<keyword id="KW-0547">Nucleotide-binding</keyword>
<keyword id="KW-0597">Phosphoprotein</keyword>
<keyword id="KW-1185">Reference proteome</keyword>
<keyword id="KW-0723">Serine/threonine-protein kinase</keyword>
<keyword id="KW-0808">Transferase</keyword>
<comment type="function">
    <text evidence="6 7 9 10 11 12 13 14 15 16 20 22 23 25">Serine/threonine kinase involved in various developmental processes (PubMed:10587646, PubMed:10962553, PubMed:11740943, PubMed:11872800, PubMed:12172554, PubMed:12893776, PubMed:14525946, PubMed:15466161, PubMed:15712201, PubMed:9601646). During early embryogenesis, acts as a survival protein (PubMed:10962553, PubMed:9601646). During mid-embryogenesis, phosphorylates and activates trh, a transcription factor required for tracheal cell fate determination (PubMed:11740943). Also regulates tracheal cell migration (PubMed:11740943, PubMed:14525946). Later in development, acts downstream of PI3K and Pk61C/PDK1 in the insulin receptor transduction pathway which regulates cell growth and organ size, by phosphorylating and antagonizing FOXO transcription factor (PubMed:10587646, PubMed:10962553, PubMed:11752451, PubMed:12893776, PubMed:24603715, PubMed:25329475, PubMed:29025897). Controls follicle cell size during oogenesis (PubMed:15712201). May also stimulate cell growth by phosphorylating Gig/Tsc2 and inactivating the Tsc complex (PubMed:12172554, PubMed:15466161). Dephosphorylation of 'Ser-586' by Phlpp triggers apoptosis and suppression of tumor growth (PubMed:10962553).</text>
</comment>
<comment type="catalytic activity">
    <reaction evidence="24">
        <text>L-seryl-[protein] + ATP = O-phospho-L-seryl-[protein] + ADP + H(+)</text>
        <dbReference type="Rhea" id="RHEA:17989"/>
        <dbReference type="Rhea" id="RHEA-COMP:9863"/>
        <dbReference type="Rhea" id="RHEA-COMP:11604"/>
        <dbReference type="ChEBI" id="CHEBI:15378"/>
        <dbReference type="ChEBI" id="CHEBI:29999"/>
        <dbReference type="ChEBI" id="CHEBI:30616"/>
        <dbReference type="ChEBI" id="CHEBI:83421"/>
        <dbReference type="ChEBI" id="CHEBI:456216"/>
        <dbReference type="EC" id="2.7.11.1"/>
    </reaction>
</comment>
<comment type="catalytic activity">
    <reaction evidence="24">
        <text>L-threonyl-[protein] + ATP = O-phospho-L-threonyl-[protein] + ADP + H(+)</text>
        <dbReference type="Rhea" id="RHEA:46608"/>
        <dbReference type="Rhea" id="RHEA-COMP:11060"/>
        <dbReference type="Rhea" id="RHEA-COMP:11605"/>
        <dbReference type="ChEBI" id="CHEBI:15378"/>
        <dbReference type="ChEBI" id="CHEBI:30013"/>
        <dbReference type="ChEBI" id="CHEBI:30616"/>
        <dbReference type="ChEBI" id="CHEBI:61977"/>
        <dbReference type="ChEBI" id="CHEBI:456216"/>
        <dbReference type="EC" id="2.7.11.1"/>
    </reaction>
</comment>
<comment type="subunit">
    <text evidence="23">Interacts with trbl.</text>
</comment>
<comment type="interaction">
    <interactant intactId="EBI-162210">
        <id>Q8INB9</id>
    </interactant>
    <interactant intactId="EBI-91763">
        <id>Q9VDE3</id>
        <label>slmb</label>
    </interactant>
    <organismsDiffer>false</organismsDiffer>
    <experiments>5</experiments>
</comment>
<comment type="interaction">
    <interactant intactId="EBI-162210">
        <id>Q8INB9</id>
    </interactant>
    <interactant intactId="EBI-86340">
        <id>P68198</id>
        <label>Ubi-p63E</label>
    </interactant>
    <organismsDiffer>false</organismsDiffer>
    <experiments>2</experiments>
</comment>
<comment type="subcellular location">
    <subcellularLocation>
        <location>Cytoplasm</location>
        <location>Cytosol</location>
    </subcellularLocation>
    <subcellularLocation>
        <location>Cell membrane</location>
    </subcellularLocation>
    <text>Recruited to plasma membrane upon activation.</text>
</comment>
<comment type="alternative products">
    <event type="alternative initiation"/>
    <isoform>
        <id>Q8INB9-1</id>
        <name>C</name>
        <name>PK85</name>
        <sequence type="displayed"/>
    </isoform>
    <isoform>
        <id>Q8INB9-2</id>
        <name>A</name>
        <name>PK66</name>
        <sequence type="described" ref="VSP_018833"/>
    </isoform>
</comment>
<comment type="tissue specificity">
    <text evidence="24">Ubiquitously expressed. Present in ovary, where it is concentrated at the basal side of follicle cells.</text>
</comment>
<comment type="developmental stage">
    <text evidence="16 24">Expressed both maternally and zygotically. Strongly expressed in embryo and pupa. Weakly expressed in larva. Mildly expressed in adult.</text>
</comment>
<comment type="domain">
    <text evidence="31">Binding of the PH domain to the phosphatidylinositol 3-kinase alpha (PI(3)K) results in its targeting to the plasma membrane.</text>
</comment>
<comment type="PTM">
    <text evidence="7 8 17 19">Phosphorylated and activated by Pk61C/PDK1 (PubMed:11344272). Phosphorylated on Ser-586 by the TORC2 complex (PubMed:10962553, PubMed:15718470, PubMed:22493059).</text>
</comment>
<comment type="disruption phenotype">
    <text evidence="20 21 25">Death at the first instar larval stage (PubMed:9601646). Conditional RNAi-mediated knockdown in the female germline reduces ovary size (PubMed:24786828). RNAi-mediated knockdown in both larval salivary glands and fat body, results in small salivary glands displaying ectopic lipid storage and reduced expression of CdsA (PubMed:24603715).</text>
</comment>
<comment type="miscellaneous">
    <molecule>Isoform A</molecule>
    <text evidence="31">Major form.</text>
</comment>
<comment type="similarity">
    <text evidence="31">Belongs to the protein kinase superfamily. AGC Ser/Thr protein kinase family. RAC subfamily.</text>
</comment>
<organism>
    <name type="scientific">Drosophila melanogaster</name>
    <name type="common">Fruit fly</name>
    <dbReference type="NCBI Taxonomy" id="7227"/>
    <lineage>
        <taxon>Eukaryota</taxon>
        <taxon>Metazoa</taxon>
        <taxon>Ecdysozoa</taxon>
        <taxon>Arthropoda</taxon>
        <taxon>Hexapoda</taxon>
        <taxon>Insecta</taxon>
        <taxon>Pterygota</taxon>
        <taxon>Neoptera</taxon>
        <taxon>Endopterygota</taxon>
        <taxon>Diptera</taxon>
        <taxon>Brachycera</taxon>
        <taxon>Muscomorpha</taxon>
        <taxon>Ephydroidea</taxon>
        <taxon>Drosophilidae</taxon>
        <taxon>Drosophila</taxon>
        <taxon>Sophophora</taxon>
    </lineage>
</organism>
<accession>Q8INB9</accession>
<accession>Q0KI65</accession>
<accession>Q24293</accession>
<accession>Q24469</accession>
<accession>Q24470</accession>
<accession>Q7JN11</accession>
<accession>Q8T9A5</accession>
<accession>Q9VEY7</accession>
<protein>
    <recommendedName>
        <fullName evidence="28">RAC serine/threonine-protein kinase</fullName>
        <shortName evidence="29">DAkt</shortName>
        <shortName evidence="28">DRAC-PK</shortName>
        <shortName evidence="30">Dakt1</shortName>
        <ecNumber evidence="24">2.7.11.1</ecNumber>
    </recommendedName>
    <alternativeName>
        <fullName evidence="30">Protein kinase B</fullName>
        <shortName evidence="30">PKB</shortName>
    </alternativeName>
</protein>
<sequence length="611" mass="68485">MNYLPFVLQRRSTVVASAPAPGSASRIPESPTTTGSNIINIIYSQSTHPNSSPTSGSAEKFSWQQSWPSRTSAAPTHDSGTMSINTTFDLSSPSVTSGHALTEQTQVVKEGWLMKRGEHIKNWRQRYFVLHSDGRLMGYRSKPADSASTPSDFLLNNFTVRGCQIMTVDRPKPFTFIIRGLQWTTVIERTFAVESELERQQWTEAIRNVSSRLIDVGEVAMTPSEQTDMTDVDMATIAEDELSEQFSVQGTTCNSSGVKKVTLENFEFLKVLGKGTFGKVILCREKATAKLYAIKILKKEVIIQKDEVAHTLTESRVLKSTNHPFLISLKYSFQTNDRLCFVMQYVNGGELFWHLSHERIFTEDRTRFYGAEIISALGYLHSQGIIYRDLKLENLLLDKDGHIKVADFGLCKEDITYGRTTKTFCGTPEYLAPEVLDDNDYGQAVDWWGTGVVMYEMICGRLPFYNRDHDVLFTLILVEEVKFPRNITDEAKNLLAGLLAKDPKKRLGGGKDDVKEIQAHPFFASINWTDLVLKKIPPPFKPQVTSDTDTRYFDKEFTGESVELTPPDPTGPLGSIAEEPLFPQFSYQGDMASTLGTSSHISTSTSLASMQ</sequence>
<feature type="chain" id="PRO_0000045784" description="RAC serine/threonine-protein kinase">
    <location>
        <begin position="1"/>
        <end position="611"/>
    </location>
</feature>
<feature type="domain" description="PH" evidence="1">
    <location>
        <begin position="106"/>
        <end position="211"/>
    </location>
</feature>
<feature type="domain" description="Protein kinase" evidence="2">
    <location>
        <begin position="266"/>
        <end position="523"/>
    </location>
</feature>
<feature type="domain" description="AGC-kinase C-terminal" evidence="3">
    <location>
        <begin position="524"/>
        <end position="597"/>
    </location>
</feature>
<feature type="region of interest" description="Disordered" evidence="5">
    <location>
        <begin position="14"/>
        <end position="33"/>
    </location>
</feature>
<feature type="region of interest" description="Disordered" evidence="5">
    <location>
        <begin position="45"/>
        <end position="88"/>
    </location>
</feature>
<feature type="compositionally biased region" description="Low complexity" evidence="5">
    <location>
        <begin position="14"/>
        <end position="25"/>
    </location>
</feature>
<feature type="active site" description="Proton acceptor" evidence="2 4">
    <location>
        <position position="389"/>
    </location>
</feature>
<feature type="binding site" evidence="2">
    <location>
        <begin position="272"/>
        <end position="280"/>
    </location>
    <ligand>
        <name>ATP</name>
        <dbReference type="ChEBI" id="CHEBI:30616"/>
    </ligand>
</feature>
<feature type="binding site" evidence="31">
    <location>
        <position position="295"/>
    </location>
    <ligand>
        <name>ATP</name>
        <dbReference type="ChEBI" id="CHEBI:30616"/>
    </ligand>
</feature>
<feature type="modified residue" description="Phosphoserine" evidence="18">
    <location>
        <position position="30"/>
    </location>
</feature>
<feature type="modified residue" description="Phosphoserine" evidence="7 17 22">
    <location>
        <position position="586"/>
    </location>
</feature>
<feature type="splice variant" id="VSP_018833" description="In isoform A." evidence="27 29">
    <location>
        <begin position="1"/>
        <end position="81"/>
    </location>
</feature>
<feature type="mutagenesis site" description="Fails to be recruited at the membrane upon activation." evidence="11">
    <original>G</original>
    <variation>S</variation>
    <location>
        <position position="180"/>
    </location>
</feature>
<feature type="mutagenesis site" description="Abolishes enzymatic activity.">
    <original>K</original>
    <variation>A</variation>
    <location>
        <position position="260"/>
    </location>
</feature>
<feature type="mutagenesis site" description="Abolishes enzymatic activity." evidence="6">
    <original>K</original>
    <variation>M</variation>
    <location>
        <position position="295"/>
    </location>
</feature>
<feature type="mutagenesis site" description="Abolishes enzymatic activity." evidence="11 25">
    <original>F</original>
    <variation>I</variation>
    <location>
        <position position="408"/>
    </location>
</feature>
<feature type="sequence conflict" description="In Ref. 2; CAA58499." evidence="31" ref="2">
    <original>A</original>
    <variation>T</variation>
    <location>
        <position position="73"/>
    </location>
</feature>
<feature type="sequence conflict" description="In Ref. 1; CAA81204." evidence="31" ref="1">
    <original>QQ</original>
    <variation>HE</variation>
    <location>
        <begin position="200"/>
        <end position="201"/>
    </location>
</feature>
<proteinExistence type="evidence at protein level"/>
<dbReference type="EC" id="2.7.11.1" evidence="24"/>
<dbReference type="EMBL" id="Z26242">
    <property type="protein sequence ID" value="CAA81204.1"/>
    <property type="molecule type" value="mRNA"/>
</dbReference>
<dbReference type="EMBL" id="X83510">
    <property type="protein sequence ID" value="CAA58499.2"/>
    <property type="molecule type" value="Genomic_DNA"/>
</dbReference>
<dbReference type="EMBL" id="X83510">
    <property type="protein sequence ID" value="CAA58500.1"/>
    <property type="molecule type" value="Genomic_DNA"/>
</dbReference>
<dbReference type="EMBL" id="AE014297">
    <property type="protein sequence ID" value="AAF55275.1"/>
    <property type="molecule type" value="Genomic_DNA"/>
</dbReference>
<dbReference type="EMBL" id="AE014297">
    <property type="protein sequence ID" value="AAN13699.3"/>
    <property type="molecule type" value="Genomic_DNA"/>
</dbReference>
<dbReference type="EMBL" id="AY069856">
    <property type="protein sequence ID" value="AAL40001.1"/>
    <property type="molecule type" value="mRNA"/>
</dbReference>
<dbReference type="PIR" id="A55888">
    <property type="entry name" value="A55888"/>
</dbReference>
<dbReference type="RefSeq" id="NP_001287353.1">
    <molecule id="Q8INB9-2"/>
    <property type="nucleotide sequence ID" value="NM_001300424.1"/>
</dbReference>
<dbReference type="RefSeq" id="NP_001287354.1">
    <molecule id="Q8INB9-2"/>
    <property type="nucleotide sequence ID" value="NM_001300425.1"/>
</dbReference>
<dbReference type="RefSeq" id="NP_732113.3">
    <molecule id="Q8INB9-1"/>
    <property type="nucleotide sequence ID" value="NM_169705.2"/>
</dbReference>
<dbReference type="RefSeq" id="NP_732114.1">
    <molecule id="Q8INB9-2"/>
    <property type="nucleotide sequence ID" value="NM_169706.2"/>
</dbReference>
<dbReference type="RefSeq" id="NP_732115.1">
    <molecule id="Q8INB9-2"/>
    <property type="nucleotide sequence ID" value="NM_169707.2"/>
</dbReference>
<dbReference type="SMR" id="Q8INB9"/>
<dbReference type="BioGRID" id="67008">
    <property type="interactions" value="202"/>
</dbReference>
<dbReference type="DIP" id="DIP-49060N"/>
<dbReference type="FunCoup" id="Q8INB9">
    <property type="interactions" value="1057"/>
</dbReference>
<dbReference type="IntAct" id="Q8INB9">
    <property type="interactions" value="42"/>
</dbReference>
<dbReference type="MINT" id="Q8INB9"/>
<dbReference type="STRING" id="7227.FBpp0082682"/>
<dbReference type="GlyGen" id="Q8INB9">
    <property type="glycosylation" value="1 site"/>
</dbReference>
<dbReference type="iPTMnet" id="Q8INB9"/>
<dbReference type="PaxDb" id="7227-FBpp0082682"/>
<dbReference type="EnsemblMetazoa" id="FBtr0083226">
    <molecule id="Q8INB9-2"/>
    <property type="protein sequence ID" value="FBpp0082680"/>
    <property type="gene ID" value="FBgn0010379"/>
</dbReference>
<dbReference type="EnsemblMetazoa" id="FBtr0083227">
    <molecule id="Q8INB9-2"/>
    <property type="protein sequence ID" value="FBpp0082681"/>
    <property type="gene ID" value="FBgn0010379"/>
</dbReference>
<dbReference type="EnsemblMetazoa" id="FBtr0083228">
    <molecule id="Q8INB9-1"/>
    <property type="protein sequence ID" value="FBpp0082682"/>
    <property type="gene ID" value="FBgn0010379"/>
</dbReference>
<dbReference type="EnsemblMetazoa" id="FBtr0344470">
    <molecule id="Q8INB9-2"/>
    <property type="protein sequence ID" value="FBpp0310841"/>
    <property type="gene ID" value="FBgn0010379"/>
</dbReference>
<dbReference type="EnsemblMetazoa" id="FBtr0344717">
    <molecule id="Q8INB9-2"/>
    <property type="protein sequence ID" value="FBpp0311050"/>
    <property type="gene ID" value="FBgn0010379"/>
</dbReference>
<dbReference type="GeneID" id="41957"/>
<dbReference type="KEGG" id="dme:Dmel_CG4006"/>
<dbReference type="AGR" id="FB:FBgn0010379"/>
<dbReference type="CTD" id="41957"/>
<dbReference type="FlyBase" id="FBgn0010379">
    <property type="gene designation" value="Akt"/>
</dbReference>
<dbReference type="VEuPathDB" id="VectorBase:FBgn0010379"/>
<dbReference type="eggNOG" id="KOG0690">
    <property type="taxonomic scope" value="Eukaryota"/>
</dbReference>
<dbReference type="GeneTree" id="ENSGT00940000168810"/>
<dbReference type="InParanoid" id="Q8INB9"/>
<dbReference type="OMA" id="VIERMFH"/>
<dbReference type="OrthoDB" id="63267at2759"/>
<dbReference type="PhylomeDB" id="Q8INB9"/>
<dbReference type="Reactome" id="R-DME-110478">
    <property type="pathway name" value="Insulin signaling pathway"/>
</dbReference>
<dbReference type="Reactome" id="R-DME-110523">
    <property type="pathway name" value="TOR signaling pathway"/>
</dbReference>
<dbReference type="Reactome" id="R-DME-1257604">
    <property type="pathway name" value="PIP3 activates AKT signaling"/>
</dbReference>
<dbReference type="Reactome" id="R-DME-1358803">
    <property type="pathway name" value="Downregulation of ERBB2:ERBB3 signaling"/>
</dbReference>
<dbReference type="Reactome" id="R-DME-1474151">
    <property type="pathway name" value="Tetrahydrobiopterin (BH4) synthesis, recycling, salvage and regulation"/>
</dbReference>
<dbReference type="Reactome" id="R-DME-165158">
    <property type="pathway name" value="Activation of AKT2"/>
</dbReference>
<dbReference type="Reactome" id="R-DME-165159">
    <property type="pathway name" value="MTOR signalling"/>
</dbReference>
<dbReference type="Reactome" id="R-DME-165181">
    <property type="pathway name" value="Inhibition of TSC complex formation by PKB"/>
</dbReference>
<dbReference type="Reactome" id="R-DME-198323">
    <property type="pathway name" value="AKT phosphorylates targets in the cytosol"/>
</dbReference>
<dbReference type="Reactome" id="R-DME-198693">
    <property type="pathway name" value="AKT phosphorylates targets in the nucleus"/>
</dbReference>
<dbReference type="Reactome" id="R-DME-199418">
    <property type="pathway name" value="Negative regulation of the PI3K/AKT network"/>
</dbReference>
<dbReference type="Reactome" id="R-DME-203615">
    <property type="pathway name" value="eNOS activation"/>
</dbReference>
<dbReference type="Reactome" id="R-DME-211163">
    <property type="pathway name" value="AKT-mediated inactivation of FOXO1A"/>
</dbReference>
<dbReference type="Reactome" id="R-DME-354192">
    <property type="pathway name" value="Integrin signaling"/>
</dbReference>
<dbReference type="Reactome" id="R-DME-3769402">
    <property type="pathway name" value="Deactivation of the beta-catenin transactivating complex"/>
</dbReference>
<dbReference type="Reactome" id="R-DME-389357">
    <property type="pathway name" value="CD28 dependent PI3K/Akt signaling"/>
</dbReference>
<dbReference type="Reactome" id="R-DME-389513">
    <property type="pathway name" value="Co-inhibition by CTLA4"/>
</dbReference>
<dbReference type="Reactome" id="R-DME-392451">
    <property type="pathway name" value="G beta:gamma signalling through PI3Kgamma"/>
</dbReference>
<dbReference type="Reactome" id="R-DME-450385">
    <property type="pathway name" value="Butyrate Response Factor 1 (BRF1) binds and destabilizes mRNA"/>
</dbReference>
<dbReference type="Reactome" id="R-DME-450604">
    <property type="pathway name" value="KSRP (KHSRP) binds and destabilizes mRNA"/>
</dbReference>
<dbReference type="Reactome" id="R-DME-5218920">
    <property type="pathway name" value="VEGFR2 mediated vascular permeability"/>
</dbReference>
<dbReference type="Reactome" id="R-DME-5628897">
    <property type="pathway name" value="TP53 Regulates Metabolic Genes"/>
</dbReference>
<dbReference type="Reactome" id="R-DME-6804758">
    <property type="pathway name" value="Regulation of TP53 Activity through Acetylation"/>
</dbReference>
<dbReference type="Reactome" id="R-DME-6804759">
    <property type="pathway name" value="Regulation of TP53 Activity through Association with Co-factors"/>
</dbReference>
<dbReference type="Reactome" id="R-DME-6811558">
    <property type="pathway name" value="PI5P, PP2A and IER3 Regulate PI3K/AKT Signaling"/>
</dbReference>
<dbReference type="Reactome" id="R-DME-69202">
    <property type="pathway name" value="Cyclin E associated events during G1/S transition"/>
</dbReference>
<dbReference type="Reactome" id="R-DME-69656">
    <property type="pathway name" value="Cyclin A:Cdk2-associated events at S phase entry"/>
</dbReference>
<dbReference type="Reactome" id="R-DME-8876198">
    <property type="pathway name" value="RAB GEFs exchange GTP for GDP on RABs"/>
</dbReference>
<dbReference type="Reactome" id="R-DME-8948751">
    <property type="pathway name" value="Regulation of PTEN stability and activity"/>
</dbReference>
<dbReference type="Reactome" id="R-DME-9009391">
    <property type="pathway name" value="Extra-nuclear estrogen signaling"/>
</dbReference>
<dbReference type="Reactome" id="R-DME-9604323">
    <property type="pathway name" value="Negative regulation of NOTCH4 signaling"/>
</dbReference>
<dbReference type="Reactome" id="R-DME-9607240">
    <property type="pathway name" value="FLT3 Signaling"/>
</dbReference>
<dbReference type="Reactome" id="R-DME-9614399">
    <property type="pathway name" value="Regulation of localization of FOXO transcription factors"/>
</dbReference>
<dbReference type="Reactome" id="R-DME-9634638">
    <property type="pathway name" value="Estrogen-dependent nuclear events downstream of ESR-membrane signaling"/>
</dbReference>
<dbReference type="Reactome" id="R-DME-9755511">
    <property type="pathway name" value="KEAP1-NFE2L2 pathway"/>
</dbReference>
<dbReference type="Reactome" id="R-DME-9841251">
    <property type="pathway name" value="Mitochondrial unfolded protein response (UPRmt)"/>
</dbReference>
<dbReference type="Reactome" id="R-DME-9856530">
    <property type="pathway name" value="High laminar flow shear stress activates signaling by PIEZO1 and PECAM1:CDH5:KDR in endothelial cells"/>
</dbReference>
<dbReference type="Reactome" id="R-DME-9856649">
    <property type="pathway name" value="Transcriptional and post-translational regulation of MITF-M expression and activity"/>
</dbReference>
<dbReference type="SignaLink" id="Q8INB9"/>
<dbReference type="BioGRID-ORCS" id="41957">
    <property type="hits" value="0 hits in 3 CRISPR screens"/>
</dbReference>
<dbReference type="ChiTaRS" id="Akt1">
    <property type="organism name" value="fly"/>
</dbReference>
<dbReference type="GenomeRNAi" id="41957"/>
<dbReference type="PRO" id="PR:Q8INB9"/>
<dbReference type="Proteomes" id="UP000000803">
    <property type="component" value="Chromosome 3R"/>
</dbReference>
<dbReference type="Bgee" id="FBgn0010379">
    <property type="expression patterns" value="Expressed in fat body cell in arthropod fat body and 250 other cell types or tissues"/>
</dbReference>
<dbReference type="ExpressionAtlas" id="Q8INB9">
    <property type="expression patterns" value="baseline and differential"/>
</dbReference>
<dbReference type="GO" id="GO:0005938">
    <property type="term" value="C:cell cortex"/>
    <property type="evidence" value="ECO:0000314"/>
    <property type="project" value="FlyBase"/>
</dbReference>
<dbReference type="GO" id="GO:0005829">
    <property type="term" value="C:cytosol"/>
    <property type="evidence" value="ECO:0000314"/>
    <property type="project" value="FlyBase"/>
</dbReference>
<dbReference type="GO" id="GO:0043025">
    <property type="term" value="C:neuronal cell body"/>
    <property type="evidence" value="ECO:0000314"/>
    <property type="project" value="FlyBase"/>
</dbReference>
<dbReference type="GO" id="GO:0005634">
    <property type="term" value="C:nucleus"/>
    <property type="evidence" value="ECO:0000314"/>
    <property type="project" value="FlyBase"/>
</dbReference>
<dbReference type="GO" id="GO:0005886">
    <property type="term" value="C:plasma membrane"/>
    <property type="evidence" value="ECO:0000304"/>
    <property type="project" value="Reactome"/>
</dbReference>
<dbReference type="GO" id="GO:0005524">
    <property type="term" value="F:ATP binding"/>
    <property type="evidence" value="ECO:0007669"/>
    <property type="project" value="UniProtKB-KW"/>
</dbReference>
<dbReference type="GO" id="GO:0106310">
    <property type="term" value="F:protein serine kinase activity"/>
    <property type="evidence" value="ECO:0007669"/>
    <property type="project" value="RHEA"/>
</dbReference>
<dbReference type="GO" id="GO:0004674">
    <property type="term" value="F:protein serine/threonine kinase activity"/>
    <property type="evidence" value="ECO:0000314"/>
    <property type="project" value="UniProtKB"/>
</dbReference>
<dbReference type="GO" id="GO:0006915">
    <property type="term" value="P:apoptotic process"/>
    <property type="evidence" value="ECO:0007669"/>
    <property type="project" value="UniProtKB-KW"/>
</dbReference>
<dbReference type="GO" id="GO:0032869">
    <property type="term" value="P:cellular response to insulin stimulus"/>
    <property type="evidence" value="ECO:0000314"/>
    <property type="project" value="FlyBase"/>
</dbReference>
<dbReference type="GO" id="GO:0042632">
    <property type="term" value="P:cholesterol homeostasis"/>
    <property type="evidence" value="ECO:0000315"/>
    <property type="project" value="FlyBase"/>
</dbReference>
<dbReference type="GO" id="GO:0007623">
    <property type="term" value="P:circadian rhythm"/>
    <property type="evidence" value="ECO:0000315"/>
    <property type="project" value="FlyBase"/>
</dbReference>
<dbReference type="GO" id="GO:0031104">
    <property type="term" value="P:dendrite regeneration"/>
    <property type="evidence" value="ECO:0000315"/>
    <property type="project" value="FlyBase"/>
</dbReference>
<dbReference type="GO" id="GO:0007427">
    <property type="term" value="P:epithelial cell migration, open tracheal system"/>
    <property type="evidence" value="ECO:0000315"/>
    <property type="project" value="UniProtKB"/>
</dbReference>
<dbReference type="GO" id="GO:0008286">
    <property type="term" value="P:insulin receptor signaling pathway"/>
    <property type="evidence" value="ECO:0000314"/>
    <property type="project" value="UniProtKB"/>
</dbReference>
<dbReference type="GO" id="GO:0035556">
    <property type="term" value="P:intracellular signal transduction"/>
    <property type="evidence" value="ECO:0000316"/>
    <property type="project" value="UniProtKB"/>
</dbReference>
<dbReference type="GO" id="GO:0055088">
    <property type="term" value="P:lipid homeostasis"/>
    <property type="evidence" value="ECO:0000315"/>
    <property type="project" value="FlyBase"/>
</dbReference>
<dbReference type="GO" id="GO:0060292">
    <property type="term" value="P:long-term synaptic depression"/>
    <property type="evidence" value="ECO:0000315"/>
    <property type="project" value="FlyBase"/>
</dbReference>
<dbReference type="GO" id="GO:0035264">
    <property type="term" value="P:multicellular organism growth"/>
    <property type="evidence" value="ECO:0000315"/>
    <property type="project" value="FlyBase"/>
</dbReference>
<dbReference type="GO" id="GO:0043066">
    <property type="term" value="P:negative regulation of apoptotic process"/>
    <property type="evidence" value="ECO:0000315"/>
    <property type="project" value="FlyBase"/>
</dbReference>
<dbReference type="GO" id="GO:0035331">
    <property type="term" value="P:negative regulation of hippo signaling"/>
    <property type="evidence" value="ECO:0000315"/>
    <property type="project" value="FlyBase"/>
</dbReference>
<dbReference type="GO" id="GO:0043524">
    <property type="term" value="P:negative regulation of neuron apoptotic process"/>
    <property type="evidence" value="ECO:0000316"/>
    <property type="project" value="FlyBase"/>
</dbReference>
<dbReference type="GO" id="GO:0090278">
    <property type="term" value="P:negative regulation of peptide hormone secretion"/>
    <property type="evidence" value="ECO:0000315"/>
    <property type="project" value="FlyBase"/>
</dbReference>
<dbReference type="GO" id="GO:0045886">
    <property type="term" value="P:negative regulation of synaptic assembly at neuromuscular junction"/>
    <property type="evidence" value="ECO:0000315"/>
    <property type="project" value="FlyBase"/>
</dbReference>
<dbReference type="GO" id="GO:0010897">
    <property type="term" value="P:negative regulation of triglyceride catabolic process"/>
    <property type="evidence" value="ECO:0000315"/>
    <property type="project" value="FlyBase"/>
</dbReference>
<dbReference type="GO" id="GO:0048477">
    <property type="term" value="P:oogenesis"/>
    <property type="evidence" value="ECO:0000315"/>
    <property type="project" value="FlyBase"/>
</dbReference>
<dbReference type="GO" id="GO:0007424">
    <property type="term" value="P:open tracheal system development"/>
    <property type="evidence" value="ECO:0000315"/>
    <property type="project" value="FlyBase"/>
</dbReference>
<dbReference type="GO" id="GO:0043491">
    <property type="term" value="P:phosphatidylinositol 3-kinase/protein kinase B signal transduction"/>
    <property type="evidence" value="ECO:0000314"/>
    <property type="project" value="FlyBase"/>
</dbReference>
<dbReference type="GO" id="GO:0048680">
    <property type="term" value="P:positive regulation of axon regeneration"/>
    <property type="evidence" value="ECO:0000315"/>
    <property type="project" value="FlyBase"/>
</dbReference>
<dbReference type="GO" id="GO:1903688">
    <property type="term" value="P:positive regulation of border follicle cell migration"/>
    <property type="evidence" value="ECO:0000316"/>
    <property type="project" value="FlyBase"/>
</dbReference>
<dbReference type="GO" id="GO:0030307">
    <property type="term" value="P:positive regulation of cell growth"/>
    <property type="evidence" value="ECO:0000315"/>
    <property type="project" value="UniProtKB"/>
</dbReference>
<dbReference type="GO" id="GO:0008284">
    <property type="term" value="P:positive regulation of cell population proliferation"/>
    <property type="evidence" value="ECO:0000316"/>
    <property type="project" value="FlyBase"/>
</dbReference>
<dbReference type="GO" id="GO:0045793">
    <property type="term" value="P:positive regulation of cell size"/>
    <property type="evidence" value="ECO:0000315"/>
    <property type="project" value="FlyBase"/>
</dbReference>
<dbReference type="GO" id="GO:0010884">
    <property type="term" value="P:positive regulation of lipid storage"/>
    <property type="evidence" value="ECO:0000315"/>
    <property type="project" value="FlyBase"/>
</dbReference>
<dbReference type="GO" id="GO:0040018">
    <property type="term" value="P:positive regulation of multicellular organism growth"/>
    <property type="evidence" value="ECO:0000316"/>
    <property type="project" value="FlyBase"/>
</dbReference>
<dbReference type="GO" id="GO:0046622">
    <property type="term" value="P:positive regulation of organ growth"/>
    <property type="evidence" value="ECO:0000315"/>
    <property type="project" value="UniProtKB"/>
</dbReference>
<dbReference type="GO" id="GO:1904263">
    <property type="term" value="P:positive regulation of TORC1 signaling"/>
    <property type="evidence" value="ECO:0000315"/>
    <property type="project" value="FlyBase"/>
</dbReference>
<dbReference type="GO" id="GO:0006468">
    <property type="term" value="P:protein phosphorylation"/>
    <property type="evidence" value="ECO:0000314"/>
    <property type="project" value="UniProtKB"/>
</dbReference>
<dbReference type="GO" id="GO:0050773">
    <property type="term" value="P:regulation of dendrite development"/>
    <property type="evidence" value="ECO:0000315"/>
    <property type="project" value="FlyBase"/>
</dbReference>
<dbReference type="GO" id="GO:0035206">
    <property type="term" value="P:regulation of hemocyte proliferation"/>
    <property type="evidence" value="ECO:0000315"/>
    <property type="project" value="FlyBase"/>
</dbReference>
<dbReference type="GO" id="GO:0040014">
    <property type="term" value="P:regulation of multicellular organism growth"/>
    <property type="evidence" value="ECO:0000315"/>
    <property type="project" value="FlyBase"/>
</dbReference>
<dbReference type="GO" id="GO:0006979">
    <property type="term" value="P:response to oxidative stress"/>
    <property type="evidence" value="ECO:0000315"/>
    <property type="project" value="FlyBase"/>
</dbReference>
<dbReference type="GO" id="GO:0048010">
    <property type="term" value="P:vascular endothelial growth factor receptor signaling pathway"/>
    <property type="evidence" value="ECO:0000314"/>
    <property type="project" value="FlyBase"/>
</dbReference>
<dbReference type="GO" id="GO:0044319">
    <property type="term" value="P:wound healing, spreading of cells"/>
    <property type="evidence" value="ECO:0000316"/>
    <property type="project" value="FlyBase"/>
</dbReference>
<dbReference type="CDD" id="cd01241">
    <property type="entry name" value="PH_PKB"/>
    <property type="match status" value="1"/>
</dbReference>
<dbReference type="CDD" id="cd05571">
    <property type="entry name" value="STKc_PKB"/>
    <property type="match status" value="1"/>
</dbReference>
<dbReference type="FunFam" id="1.10.510.10:FF:000033">
    <property type="entry name" value="Non-specific serine/threonine protein kinase"/>
    <property type="match status" value="1"/>
</dbReference>
<dbReference type="FunFam" id="2.30.29.30:FF:000404">
    <property type="entry name" value="Non-specific serine/threonine protein kinase"/>
    <property type="match status" value="1"/>
</dbReference>
<dbReference type="FunFam" id="3.30.200.20:FF:001053">
    <property type="entry name" value="Non-specific serine/threonine protein kinase"/>
    <property type="match status" value="1"/>
</dbReference>
<dbReference type="Gene3D" id="3.30.200.20">
    <property type="entry name" value="Phosphorylase Kinase, domain 1"/>
    <property type="match status" value="1"/>
</dbReference>
<dbReference type="Gene3D" id="2.30.29.30">
    <property type="entry name" value="Pleckstrin-homology domain (PH domain)/Phosphotyrosine-binding domain (PTB)"/>
    <property type="match status" value="1"/>
</dbReference>
<dbReference type="Gene3D" id="1.10.510.10">
    <property type="entry name" value="Transferase(Phosphotransferase) domain 1"/>
    <property type="match status" value="1"/>
</dbReference>
<dbReference type="InterPro" id="IPR000961">
    <property type="entry name" value="AGC-kinase_C"/>
</dbReference>
<dbReference type="InterPro" id="IPR011009">
    <property type="entry name" value="Kinase-like_dom_sf"/>
</dbReference>
<dbReference type="InterPro" id="IPR011993">
    <property type="entry name" value="PH-like_dom_sf"/>
</dbReference>
<dbReference type="InterPro" id="IPR001849">
    <property type="entry name" value="PH_domain"/>
</dbReference>
<dbReference type="InterPro" id="IPR039026">
    <property type="entry name" value="PH_PKB"/>
</dbReference>
<dbReference type="InterPro" id="IPR017892">
    <property type="entry name" value="Pkinase_C"/>
</dbReference>
<dbReference type="InterPro" id="IPR000719">
    <property type="entry name" value="Prot_kinase_dom"/>
</dbReference>
<dbReference type="InterPro" id="IPR017441">
    <property type="entry name" value="Protein_kinase_ATP_BS"/>
</dbReference>
<dbReference type="InterPro" id="IPR008271">
    <property type="entry name" value="Ser/Thr_kinase_AS"/>
</dbReference>
<dbReference type="PANTHER" id="PTHR24351">
    <property type="entry name" value="RIBOSOMAL PROTEIN S6 KINASE"/>
    <property type="match status" value="1"/>
</dbReference>
<dbReference type="Pfam" id="PF00169">
    <property type="entry name" value="PH"/>
    <property type="match status" value="1"/>
</dbReference>
<dbReference type="Pfam" id="PF00069">
    <property type="entry name" value="Pkinase"/>
    <property type="match status" value="1"/>
</dbReference>
<dbReference type="Pfam" id="PF00433">
    <property type="entry name" value="Pkinase_C"/>
    <property type="match status" value="1"/>
</dbReference>
<dbReference type="SMART" id="SM00233">
    <property type="entry name" value="PH"/>
    <property type="match status" value="1"/>
</dbReference>
<dbReference type="SMART" id="SM00133">
    <property type="entry name" value="S_TK_X"/>
    <property type="match status" value="1"/>
</dbReference>
<dbReference type="SMART" id="SM00220">
    <property type="entry name" value="S_TKc"/>
    <property type="match status" value="1"/>
</dbReference>
<dbReference type="SUPFAM" id="SSF50729">
    <property type="entry name" value="PH domain-like"/>
    <property type="match status" value="1"/>
</dbReference>
<dbReference type="SUPFAM" id="SSF56112">
    <property type="entry name" value="Protein kinase-like (PK-like)"/>
    <property type="match status" value="1"/>
</dbReference>
<dbReference type="PROSITE" id="PS51285">
    <property type="entry name" value="AGC_KINASE_CTER"/>
    <property type="match status" value="1"/>
</dbReference>
<dbReference type="PROSITE" id="PS50003">
    <property type="entry name" value="PH_DOMAIN"/>
    <property type="match status" value="1"/>
</dbReference>
<dbReference type="PROSITE" id="PS00107">
    <property type="entry name" value="PROTEIN_KINASE_ATP"/>
    <property type="match status" value="1"/>
</dbReference>
<dbReference type="PROSITE" id="PS50011">
    <property type="entry name" value="PROTEIN_KINASE_DOM"/>
    <property type="match status" value="1"/>
</dbReference>
<dbReference type="PROSITE" id="PS00108">
    <property type="entry name" value="PROTEIN_KINASE_ST"/>
    <property type="match status" value="1"/>
</dbReference>
<reference key="1">
    <citation type="journal article" date="1994" name="Oncogene">
        <title>The SH2-like Akt homology (AH) domain of c-akt is present in multiple copies in the genome of vertebrate and invertebrate eucaryotes. Cloning and characterisation of the Drosophila melanogaster c-akt homolog Dakt1.</title>
        <authorList>
            <person name="Franke T.F."/>
            <person name="Tartof K.D."/>
            <person name="Tsichlis P.N."/>
        </authorList>
    </citation>
    <scope>NUCLEOTIDE SEQUENCE [MRNA] (ISOFORM A)</scope>
</reference>
<reference key="2">
    <citation type="journal article" date="1995" name="J. Biol. Chem.">
        <title>Developmental regulation of expression and activity of multiple forms of the Drosophila RAC protein kinase.</title>
        <authorList>
            <person name="Andjelkovic M."/>
            <person name="Jones P.F."/>
            <person name="Grossniklaus U."/>
            <person name="Cron P."/>
            <person name="Schier A.F."/>
            <person name="Dick M."/>
            <person name="Bilbe G."/>
            <person name="Hemmings B.A."/>
        </authorList>
    </citation>
    <scope>NUCLEOTIDE SEQUENCE [GENOMIC DNA]</scope>
    <scope>ALTERNATIVE INITIATION (ISOFORMS A AND C)</scope>
    <scope>ENZYME ACTIVITY</scope>
    <scope>TISSUE SPECIFICITY</scope>
    <scope>DEVELOPMENTAL STAGE</scope>
</reference>
<reference key="3">
    <citation type="journal article" date="2000" name="Science">
        <title>The genome sequence of Drosophila melanogaster.</title>
        <authorList>
            <person name="Adams M.D."/>
            <person name="Celniker S.E."/>
            <person name="Holt R.A."/>
            <person name="Evans C.A."/>
            <person name="Gocayne J.D."/>
            <person name="Amanatides P.G."/>
            <person name="Scherer S.E."/>
            <person name="Li P.W."/>
            <person name="Hoskins R.A."/>
            <person name="Galle R.F."/>
            <person name="George R.A."/>
            <person name="Lewis S.E."/>
            <person name="Richards S."/>
            <person name="Ashburner M."/>
            <person name="Henderson S.N."/>
            <person name="Sutton G.G."/>
            <person name="Wortman J.R."/>
            <person name="Yandell M.D."/>
            <person name="Zhang Q."/>
            <person name="Chen L.X."/>
            <person name="Brandon R.C."/>
            <person name="Rogers Y.-H.C."/>
            <person name="Blazej R.G."/>
            <person name="Champe M."/>
            <person name="Pfeiffer B.D."/>
            <person name="Wan K.H."/>
            <person name="Doyle C."/>
            <person name="Baxter E.G."/>
            <person name="Helt G."/>
            <person name="Nelson C.R."/>
            <person name="Miklos G.L.G."/>
            <person name="Abril J.F."/>
            <person name="Agbayani A."/>
            <person name="An H.-J."/>
            <person name="Andrews-Pfannkoch C."/>
            <person name="Baldwin D."/>
            <person name="Ballew R.M."/>
            <person name="Basu A."/>
            <person name="Baxendale J."/>
            <person name="Bayraktaroglu L."/>
            <person name="Beasley E.M."/>
            <person name="Beeson K.Y."/>
            <person name="Benos P.V."/>
            <person name="Berman B.P."/>
            <person name="Bhandari D."/>
            <person name="Bolshakov S."/>
            <person name="Borkova D."/>
            <person name="Botchan M.R."/>
            <person name="Bouck J."/>
            <person name="Brokstein P."/>
            <person name="Brottier P."/>
            <person name="Burtis K.C."/>
            <person name="Busam D.A."/>
            <person name="Butler H."/>
            <person name="Cadieu E."/>
            <person name="Center A."/>
            <person name="Chandra I."/>
            <person name="Cherry J.M."/>
            <person name="Cawley S."/>
            <person name="Dahlke C."/>
            <person name="Davenport L.B."/>
            <person name="Davies P."/>
            <person name="de Pablos B."/>
            <person name="Delcher A."/>
            <person name="Deng Z."/>
            <person name="Mays A.D."/>
            <person name="Dew I."/>
            <person name="Dietz S.M."/>
            <person name="Dodson K."/>
            <person name="Doup L.E."/>
            <person name="Downes M."/>
            <person name="Dugan-Rocha S."/>
            <person name="Dunkov B.C."/>
            <person name="Dunn P."/>
            <person name="Durbin K.J."/>
            <person name="Evangelista C.C."/>
            <person name="Ferraz C."/>
            <person name="Ferriera S."/>
            <person name="Fleischmann W."/>
            <person name="Fosler C."/>
            <person name="Gabrielian A.E."/>
            <person name="Garg N.S."/>
            <person name="Gelbart W.M."/>
            <person name="Glasser K."/>
            <person name="Glodek A."/>
            <person name="Gong F."/>
            <person name="Gorrell J.H."/>
            <person name="Gu Z."/>
            <person name="Guan P."/>
            <person name="Harris M."/>
            <person name="Harris N.L."/>
            <person name="Harvey D.A."/>
            <person name="Heiman T.J."/>
            <person name="Hernandez J.R."/>
            <person name="Houck J."/>
            <person name="Hostin D."/>
            <person name="Houston K.A."/>
            <person name="Howland T.J."/>
            <person name="Wei M.-H."/>
            <person name="Ibegwam C."/>
            <person name="Jalali M."/>
            <person name="Kalush F."/>
            <person name="Karpen G.H."/>
            <person name="Ke Z."/>
            <person name="Kennison J.A."/>
            <person name="Ketchum K.A."/>
            <person name="Kimmel B.E."/>
            <person name="Kodira C.D."/>
            <person name="Kraft C.L."/>
            <person name="Kravitz S."/>
            <person name="Kulp D."/>
            <person name="Lai Z."/>
            <person name="Lasko P."/>
            <person name="Lei Y."/>
            <person name="Levitsky A.A."/>
            <person name="Li J.H."/>
            <person name="Li Z."/>
            <person name="Liang Y."/>
            <person name="Lin X."/>
            <person name="Liu X."/>
            <person name="Mattei B."/>
            <person name="McIntosh T.C."/>
            <person name="McLeod M.P."/>
            <person name="McPherson D."/>
            <person name="Merkulov G."/>
            <person name="Milshina N.V."/>
            <person name="Mobarry C."/>
            <person name="Morris J."/>
            <person name="Moshrefi A."/>
            <person name="Mount S.M."/>
            <person name="Moy M."/>
            <person name="Murphy B."/>
            <person name="Murphy L."/>
            <person name="Muzny D.M."/>
            <person name="Nelson D.L."/>
            <person name="Nelson D.R."/>
            <person name="Nelson K.A."/>
            <person name="Nixon K."/>
            <person name="Nusskern D.R."/>
            <person name="Pacleb J.M."/>
            <person name="Palazzolo M."/>
            <person name="Pittman G.S."/>
            <person name="Pan S."/>
            <person name="Pollard J."/>
            <person name="Puri V."/>
            <person name="Reese M.G."/>
            <person name="Reinert K."/>
            <person name="Remington K."/>
            <person name="Saunders R.D.C."/>
            <person name="Scheeler F."/>
            <person name="Shen H."/>
            <person name="Shue B.C."/>
            <person name="Siden-Kiamos I."/>
            <person name="Simpson M."/>
            <person name="Skupski M.P."/>
            <person name="Smith T.J."/>
            <person name="Spier E."/>
            <person name="Spradling A.C."/>
            <person name="Stapleton M."/>
            <person name="Strong R."/>
            <person name="Sun E."/>
            <person name="Svirskas R."/>
            <person name="Tector C."/>
            <person name="Turner R."/>
            <person name="Venter E."/>
            <person name="Wang A.H."/>
            <person name="Wang X."/>
            <person name="Wang Z.-Y."/>
            <person name="Wassarman D.A."/>
            <person name="Weinstock G.M."/>
            <person name="Weissenbach J."/>
            <person name="Williams S.M."/>
            <person name="Woodage T."/>
            <person name="Worley K.C."/>
            <person name="Wu D."/>
            <person name="Yang S."/>
            <person name="Yao Q.A."/>
            <person name="Ye J."/>
            <person name="Yeh R.-F."/>
            <person name="Zaveri J.S."/>
            <person name="Zhan M."/>
            <person name="Zhang G."/>
            <person name="Zhao Q."/>
            <person name="Zheng L."/>
            <person name="Zheng X.H."/>
            <person name="Zhong F.N."/>
            <person name="Zhong W."/>
            <person name="Zhou X."/>
            <person name="Zhu S.C."/>
            <person name="Zhu X."/>
            <person name="Smith H.O."/>
            <person name="Gibbs R.A."/>
            <person name="Myers E.W."/>
            <person name="Rubin G.M."/>
            <person name="Venter J.C."/>
        </authorList>
    </citation>
    <scope>NUCLEOTIDE SEQUENCE [LARGE SCALE GENOMIC DNA]</scope>
    <source>
        <strain>Berkeley</strain>
    </source>
</reference>
<reference key="4">
    <citation type="journal article" date="2002" name="Genome Biol.">
        <title>Annotation of the Drosophila melanogaster euchromatic genome: a systematic review.</title>
        <authorList>
            <person name="Misra S."/>
            <person name="Crosby M.A."/>
            <person name="Mungall C.J."/>
            <person name="Matthews B.B."/>
            <person name="Campbell K.S."/>
            <person name="Hradecky P."/>
            <person name="Huang Y."/>
            <person name="Kaminker J.S."/>
            <person name="Millburn G.H."/>
            <person name="Prochnik S.E."/>
            <person name="Smith C.D."/>
            <person name="Tupy J.L."/>
            <person name="Whitfield E.J."/>
            <person name="Bayraktaroglu L."/>
            <person name="Berman B.P."/>
            <person name="Bettencourt B.R."/>
            <person name="Celniker S.E."/>
            <person name="de Grey A.D.N.J."/>
            <person name="Drysdale R.A."/>
            <person name="Harris N.L."/>
            <person name="Richter J."/>
            <person name="Russo S."/>
            <person name="Schroeder A.J."/>
            <person name="Shu S.Q."/>
            <person name="Stapleton M."/>
            <person name="Yamada C."/>
            <person name="Ashburner M."/>
            <person name="Gelbart W.M."/>
            <person name="Rubin G.M."/>
            <person name="Lewis S.E."/>
        </authorList>
    </citation>
    <scope>GENOME REANNOTATION</scope>
    <scope>ALTERNATIVE INITIATION</scope>
    <source>
        <strain>Berkeley</strain>
    </source>
</reference>
<reference key="5">
    <citation type="journal article" date="2002" name="Genome Biol.">
        <title>A Drosophila full-length cDNA resource.</title>
        <authorList>
            <person name="Stapleton M."/>
            <person name="Carlson J.W."/>
            <person name="Brokstein P."/>
            <person name="Yu C."/>
            <person name="Champe M."/>
            <person name="George R.A."/>
            <person name="Guarin H."/>
            <person name="Kronmiller B."/>
            <person name="Pacleb J.M."/>
            <person name="Park S."/>
            <person name="Wan K.H."/>
            <person name="Rubin G.M."/>
            <person name="Celniker S.E."/>
        </authorList>
    </citation>
    <scope>NUCLEOTIDE SEQUENCE [LARGE SCALE MRNA] (ISOFORM A)</scope>
    <source>
        <strain>Berkeley</strain>
        <tissue>Embryo</tissue>
    </source>
</reference>
<reference key="6">
    <citation type="journal article" date="1998" name="Curr. Biol.">
        <title>Genetic analysis of protein kinase B (AKT) in Drosophila.</title>
        <authorList>
            <person name="Staveley B.E."/>
            <person name="Ruel L."/>
            <person name="Jin J."/>
            <person name="Stambolic V."/>
            <person name="Mastronardi F.G."/>
            <person name="Heitzler P."/>
            <person name="Woodgett J.R."/>
            <person name="Manoukian A.S."/>
        </authorList>
    </citation>
    <scope>FUNCTION</scope>
    <scope>MUTAGENESIS OF PHE-408</scope>
    <scope>DISRUPTION PHENOTYPE</scope>
</reference>
<reference key="7">
    <citation type="journal article" date="1999" name="Nat. Cell Biol.">
        <title>Cell-autonomous regulation of cell and organ growth in Drosophila by Akt/PKB.</title>
        <authorList>
            <person name="Verdu J."/>
            <person name="Buratovich M.A."/>
            <person name="Wilder E.L."/>
            <person name="Birnbaum M.J."/>
        </authorList>
    </citation>
    <scope>FUNCTION</scope>
    <scope>MUTAGENESIS OF LYS-295</scope>
</reference>
<reference key="8">
    <citation type="journal article" date="2000" name="Oncogene">
        <title>The conserved PI3'K/PTEN/Akt signaling pathway regulates both cell size and survival in Drosophila.</title>
        <authorList>
            <person name="Scanga S.E."/>
            <person name="Ruel L."/>
            <person name="Binari R.C."/>
            <person name="Snow B."/>
            <person name="Stambolic V."/>
            <person name="Bouchard D."/>
            <person name="Peters M."/>
            <person name="Calvieri B."/>
            <person name="Mak T.W."/>
            <person name="Woodgett J.R."/>
            <person name="Manoukian A.S."/>
        </authorList>
    </citation>
    <scope>FUNCTION</scope>
    <scope>PHOSPHORYLATION AT SER-586</scope>
</reference>
<reference key="9">
    <citation type="journal article" date="2001" name="Dev. Cell">
        <title>Regulation of Drosophila tracheal system development by protein kinase B.</title>
        <authorList>
            <person name="Jin J."/>
            <person name="Anthopoulos N."/>
            <person name="Wetsch B."/>
            <person name="Binari R.C."/>
            <person name="Isaac D.D."/>
            <person name="Andrew D.J."/>
            <person name="Woodgett J.R."/>
            <person name="Manoukian A.S."/>
        </authorList>
    </citation>
    <scope>FUNCTION</scope>
</reference>
<reference key="10">
    <citation type="journal article" date="2001" name="Proc. Natl. Acad. Sci. U.S.A.">
        <title>Drosophila phosphoinositide-dependent kinase-1 regulates apoptosis and growth via the phosphoinositide 3-kinase-dependent signaling pathway.</title>
        <authorList>
            <person name="Cho K.S."/>
            <person name="Lee J.H."/>
            <person name="Kim S."/>
            <person name="Kim D."/>
            <person name="Koh H."/>
            <person name="Lee J."/>
            <person name="Kim C."/>
            <person name="Kim J."/>
            <person name="Chung J."/>
        </authorList>
    </citation>
    <scope>PHOSPHORYLATION</scope>
</reference>
<reference key="11">
    <citation type="journal article" date="2001" name="Proc. Natl. Acad. Sci. U.S.A.">
        <title>PDK1 regulates growth through Akt and S6K in Drosophila.</title>
        <authorList>
            <person name="Rintelen F."/>
            <person name="Stocker H."/>
            <person name="Thomas G."/>
            <person name="Hafen E."/>
        </authorList>
    </citation>
    <scope>FUNCTION</scope>
</reference>
<reference key="12">
    <citation type="journal article" date="2002" name="Nat. Cell Biol.">
        <title>Akt regulates growth by directly phosphorylating Tsc2.</title>
        <authorList>
            <person name="Potter C.J."/>
            <person name="Pedraza L.G."/>
            <person name="Xu T."/>
        </authorList>
    </citation>
    <scope>FUNCTION</scope>
</reference>
<reference key="13">
    <citation type="journal article" date="2002" name="Science">
        <title>Living with lethal PIP3 levels: viability of flies lacking PTEN restored by a PH domain mutation in Akt/PKB.</title>
        <authorList>
            <person name="Stocker H."/>
            <person name="Andjelkovic M."/>
            <person name="Oldham S."/>
            <person name="Laffargue M."/>
            <person name="Wymann M.P."/>
            <person name="Hemmings B.A."/>
            <person name="Hafen E."/>
        </authorList>
    </citation>
    <scope>FUNCTION</scope>
    <scope>MUTAGENESIS OF GLY-180 AND PHE-408</scope>
</reference>
<reference key="14">
    <citation type="journal article" date="2003" name="FASEB J.">
        <title>Coordinated functions of Akt/PKB and ETS1 in tubule formation.</title>
        <authorList>
            <person name="Lavenburg K.R."/>
            <person name="Ivey J."/>
            <person name="Hsu T."/>
            <person name="Muise-Helmericks R.C."/>
        </authorList>
    </citation>
    <scope>FUNCTION</scope>
</reference>
<reference key="15">
    <citation type="journal article" date="2003" name="Genes Dev.">
        <title>Control of cell number by Drosophila FOXO: downstream and feedback regulation of the insulin receptor pathway.</title>
        <authorList>
            <person name="Puig O."/>
            <person name="Marr M.T."/>
            <person name="Ruhf M.L."/>
            <person name="Tjian R."/>
        </authorList>
    </citation>
    <scope>FUNCTION</scope>
</reference>
<reference key="16">
    <citation type="journal article" date="2004" name="Genes Dev.">
        <title>Tsc2 is not a critical target of Akt during normal Drosophila development.</title>
        <authorList>
            <person name="Dong J."/>
            <person name="Pan D."/>
        </authorList>
    </citation>
    <scope>FUNCTION</scope>
</reference>
<reference key="17">
    <citation type="journal article" date="2005" name="Dev. Dyn.">
        <title>dAkt kinase controls follicle cell size during Drosophila oogenesis.</title>
        <authorList>
            <person name="Cavaliere V."/>
            <person name="Donati A."/>
            <person name="Hsouna A."/>
            <person name="Hsu T."/>
            <person name="Gargiulo G."/>
        </authorList>
    </citation>
    <scope>FUNCTION</scope>
    <scope>DEVELOPMENTAL STAGE</scope>
</reference>
<reference key="18">
    <citation type="journal article" date="2005" name="Mol. Cell">
        <title>PHLPP: a phosphatase that directly dephosphorylates Akt, promotes apoptosis, and suppresses tumor growth.</title>
        <authorList>
            <person name="Gao T."/>
            <person name="Furnari F."/>
            <person name="Newton A.C."/>
        </authorList>
    </citation>
    <scope>DEPHOSPHORYLATION AT SER-586</scope>
</reference>
<reference key="19">
    <citation type="journal article" date="2005" name="Science">
        <title>Phosphorylation and regulation of Akt/PKB by the rictor-mTOR complex.</title>
        <authorList>
            <person name="Sarbassov D.D."/>
            <person name="Guertin D.A."/>
            <person name="Ali S.M."/>
            <person name="Sabatini D.M."/>
        </authorList>
    </citation>
    <scope>PHOSPHORYLATION AT SER-586</scope>
</reference>
<reference key="20">
    <citation type="journal article" date="2008" name="J. Proteome Res.">
        <title>Phosphoproteome analysis of Drosophila melanogaster embryos.</title>
        <authorList>
            <person name="Zhai B."/>
            <person name="Villen J."/>
            <person name="Beausoleil S.A."/>
            <person name="Mintseris J."/>
            <person name="Gygi S.P."/>
        </authorList>
    </citation>
    <scope>PHOSPHORYLATION [LARGE SCALE ANALYSIS] AT SER-30</scope>
    <scope>IDENTIFICATION BY MASS SPECTROMETRY</scope>
    <source>
        <tissue>Embryo</tissue>
    </source>
</reference>
<reference key="21">
    <citation type="journal article" date="2012" name="Mol. Cell. Biol.">
        <title>LST8 regulates cell growth via target-of-rapamycin complex 2 (TORC2).</title>
        <authorList>
            <person name="Wang T."/>
            <person name="Blumhagen R."/>
            <person name="Lao U."/>
            <person name="Kuo Y."/>
            <person name="Edgar B.A."/>
        </authorList>
    </citation>
    <scope>PHOSPHORYLATION</scope>
</reference>
<reference key="22">
    <citation type="journal article" date="2014" name="Cell Death Differ.">
        <title>The TORC1 inhibitors Nprl2 and Nprl3 mediate an adaptive response to amino-acid starvation in Drosophila.</title>
        <authorList>
            <person name="Wei Y."/>
            <person name="Lilly M.A."/>
        </authorList>
    </citation>
    <scope>DISRUPTION PHENOTYPE</scope>
</reference>
<reference key="23">
    <citation type="journal article" date="2014" name="PLoS Genet.">
        <title>CDP-diacylglycerol synthetase coordinates cell growth and fat storage through phosphatidylinositol metabolism and the insulin pathway.</title>
        <authorList>
            <person name="Liu Y."/>
            <person name="Wang W."/>
            <person name="Shui G."/>
            <person name="Huang X."/>
        </authorList>
    </citation>
    <scope>FUNCTION</scope>
    <scope>DISRUPTION PHENOTYPE</scope>
</reference>
<reference key="24">
    <citation type="journal article" date="2014" name="PLoS ONE">
        <title>Drosophila tribbles antagonizes insulin signaling-mediated growth and metabolism via interactions with Akt kinase.</title>
        <authorList>
            <person name="Das R."/>
            <person name="Sebo Z."/>
            <person name="Pence L."/>
            <person name="Dobens L.L."/>
        </authorList>
    </citation>
    <scope>FUNCTION</scope>
    <scope>PHOSPHORYLATION AT SER-586</scope>
</reference>
<reference key="25">
    <citation type="journal article" date="2017" name="Dis. Model. Mech.">
        <title>A Drosophila model of insulin resistance associated with the human Trib3 Q/R polymorphism.</title>
        <authorList>
            <person name="Fischer Z."/>
            <person name="Das R."/>
            <person name="Shipman A."/>
            <person name="Fan J.Y."/>
            <person name="Pence L."/>
            <person name="Bouyain S."/>
            <person name="Dobens L.L."/>
        </authorList>
    </citation>
    <scope>FUNCTION</scope>
    <scope>INTERACTION WITH TRBL</scope>
</reference>
<name>AKT1_DROME</name>
<evidence type="ECO:0000255" key="1">
    <source>
        <dbReference type="PROSITE-ProRule" id="PRU00145"/>
    </source>
</evidence>
<evidence type="ECO:0000255" key="2">
    <source>
        <dbReference type="PROSITE-ProRule" id="PRU00159"/>
    </source>
</evidence>
<evidence type="ECO:0000255" key="3">
    <source>
        <dbReference type="PROSITE-ProRule" id="PRU00618"/>
    </source>
</evidence>
<evidence type="ECO:0000255" key="4">
    <source>
        <dbReference type="PROSITE-ProRule" id="PRU10027"/>
    </source>
</evidence>
<evidence type="ECO:0000256" key="5">
    <source>
        <dbReference type="SAM" id="MobiDB-lite"/>
    </source>
</evidence>
<evidence type="ECO:0000269" key="6">
    <source>
    </source>
</evidence>
<evidence type="ECO:0000269" key="7">
    <source>
    </source>
</evidence>
<evidence type="ECO:0000269" key="8">
    <source>
    </source>
</evidence>
<evidence type="ECO:0000269" key="9">
    <source>
    </source>
</evidence>
<evidence type="ECO:0000269" key="10">
    <source>
    </source>
</evidence>
<evidence type="ECO:0000269" key="11">
    <source>
    </source>
</evidence>
<evidence type="ECO:0000269" key="12">
    <source>
    </source>
</evidence>
<evidence type="ECO:0000269" key="13">
    <source>
    </source>
</evidence>
<evidence type="ECO:0000269" key="14">
    <source>
    </source>
</evidence>
<evidence type="ECO:0000269" key="15">
    <source>
    </source>
</evidence>
<evidence type="ECO:0000269" key="16">
    <source>
    </source>
</evidence>
<evidence type="ECO:0000269" key="17">
    <source>
    </source>
</evidence>
<evidence type="ECO:0000269" key="18">
    <source>
    </source>
</evidence>
<evidence type="ECO:0000269" key="19">
    <source>
    </source>
</evidence>
<evidence type="ECO:0000269" key="20">
    <source>
    </source>
</evidence>
<evidence type="ECO:0000269" key="21">
    <source>
    </source>
</evidence>
<evidence type="ECO:0000269" key="22">
    <source>
    </source>
</evidence>
<evidence type="ECO:0000269" key="23">
    <source>
    </source>
</evidence>
<evidence type="ECO:0000269" key="24">
    <source>
    </source>
</evidence>
<evidence type="ECO:0000269" key="25">
    <source>
    </source>
</evidence>
<evidence type="ECO:0000303" key="26">
    <source>
    </source>
</evidence>
<evidence type="ECO:0000303" key="27">
    <source>
    </source>
</evidence>
<evidence type="ECO:0000303" key="28">
    <source>
    </source>
</evidence>
<evidence type="ECO:0000303" key="29">
    <source>
    </source>
</evidence>
<evidence type="ECO:0000303" key="30">
    <source>
    </source>
</evidence>
<evidence type="ECO:0000305" key="31"/>
<evidence type="ECO:0000312" key="32">
    <source>
        <dbReference type="FlyBase" id="FBgn0010379"/>
    </source>
</evidence>